<keyword id="KW-0031">Aminopeptidase</keyword>
<keyword id="KW-0963">Cytoplasm</keyword>
<keyword id="KW-0378">Hydrolase</keyword>
<keyword id="KW-0464">Manganese</keyword>
<keyword id="KW-0479">Metal-binding</keyword>
<keyword id="KW-0645">Protease</keyword>
<keyword id="KW-1185">Reference proteome</keyword>
<sequence>MTEAMKITLSTQPADARWGEKATYSINNDGITLHLNGADDLGLIQRAARKIDGLGIKHVQLSGEGWDADRCWAFWQGYKAPKGTRKVEWPDLDDAQRQELDNRLMIIDWVRDTINAPAEELGPSQLAQRAVDLISNVAGDRVTYRITKGEDLREQGYMGLHTVGRGSERSPVLLALDYNPTGDKEAPVYACLVGKGITFDSGGYSIKQTAFMDSMKSDMGGAATVTGALAFAITRGLNKRVKLFLCCADNLISGNAFKLGDIITYRNGKKVEVMNTDAEGRLVLADGLIDASAQKPEMIIDAATLTGAAKTALGNDYHALFSFDDALAGRLLASASQENEPFWRLPLAEFHRSQLPSNFAELNNTGSAAYPAGASTAAGFLSHFVENYQQGWLHIDCSATYRKAPVEQWSAGATGLGVRTIANLLTA</sequence>
<dbReference type="EC" id="3.4.11.23" evidence="1"/>
<dbReference type="EMBL" id="CU928145">
    <property type="protein sequence ID" value="CAU98681.1"/>
    <property type="molecule type" value="Genomic_DNA"/>
</dbReference>
<dbReference type="RefSeq" id="WP_000133582.1">
    <property type="nucleotide sequence ID" value="NC_011748.1"/>
</dbReference>
<dbReference type="SMR" id="B7LDB5"/>
<dbReference type="MEROPS" id="M17.004"/>
<dbReference type="GeneID" id="93774613"/>
<dbReference type="KEGG" id="eck:EC55989_2808"/>
<dbReference type="HOGENOM" id="CLU_013734_7_1_6"/>
<dbReference type="Proteomes" id="UP000000746">
    <property type="component" value="Chromosome"/>
</dbReference>
<dbReference type="GO" id="GO:0005737">
    <property type="term" value="C:cytoplasm"/>
    <property type="evidence" value="ECO:0007669"/>
    <property type="project" value="UniProtKB-SubCell"/>
</dbReference>
<dbReference type="GO" id="GO:0030145">
    <property type="term" value="F:manganese ion binding"/>
    <property type="evidence" value="ECO:0007669"/>
    <property type="project" value="UniProtKB-UniRule"/>
</dbReference>
<dbReference type="GO" id="GO:0070006">
    <property type="term" value="F:metalloaminopeptidase activity"/>
    <property type="evidence" value="ECO:0007669"/>
    <property type="project" value="InterPro"/>
</dbReference>
<dbReference type="GO" id="GO:0006508">
    <property type="term" value="P:proteolysis"/>
    <property type="evidence" value="ECO:0007669"/>
    <property type="project" value="UniProtKB-UniRule"/>
</dbReference>
<dbReference type="CDD" id="cd00433">
    <property type="entry name" value="Peptidase_M17"/>
    <property type="match status" value="1"/>
</dbReference>
<dbReference type="FunFam" id="3.40.630.10:FF:000037">
    <property type="entry name" value="Peptidase B"/>
    <property type="match status" value="1"/>
</dbReference>
<dbReference type="Gene3D" id="3.40.630.10">
    <property type="entry name" value="Zn peptidases"/>
    <property type="match status" value="1"/>
</dbReference>
<dbReference type="HAMAP" id="MF_00504">
    <property type="entry name" value="Aminopeptidase_M17"/>
    <property type="match status" value="1"/>
</dbReference>
<dbReference type="InterPro" id="IPR011356">
    <property type="entry name" value="Leucine_aapep/pepB"/>
</dbReference>
<dbReference type="InterPro" id="IPR047620">
    <property type="entry name" value="M17_PepB-like_N"/>
</dbReference>
<dbReference type="InterPro" id="IPR008330">
    <property type="entry name" value="Pept_M17_PepB"/>
</dbReference>
<dbReference type="InterPro" id="IPR000819">
    <property type="entry name" value="Peptidase_M17_C"/>
</dbReference>
<dbReference type="NCBIfam" id="NF003450">
    <property type="entry name" value="PRK05015.1"/>
    <property type="match status" value="1"/>
</dbReference>
<dbReference type="PANTHER" id="PTHR11963">
    <property type="entry name" value="LEUCINE AMINOPEPTIDASE-RELATED"/>
    <property type="match status" value="1"/>
</dbReference>
<dbReference type="PANTHER" id="PTHR11963:SF20">
    <property type="entry name" value="PEPTIDASE B"/>
    <property type="match status" value="1"/>
</dbReference>
<dbReference type="Pfam" id="PF12404">
    <property type="entry name" value="DUF3663"/>
    <property type="match status" value="1"/>
</dbReference>
<dbReference type="Pfam" id="PF00883">
    <property type="entry name" value="Peptidase_M17"/>
    <property type="match status" value="1"/>
</dbReference>
<dbReference type="PIRSF" id="PIRSF036388">
    <property type="entry name" value="Ctsl_amnpptdse_B"/>
    <property type="match status" value="1"/>
</dbReference>
<dbReference type="PRINTS" id="PR00481">
    <property type="entry name" value="LAMNOPPTDASE"/>
</dbReference>
<dbReference type="SUPFAM" id="SSF53187">
    <property type="entry name" value="Zn-dependent exopeptidases"/>
    <property type="match status" value="1"/>
</dbReference>
<dbReference type="PROSITE" id="PS00631">
    <property type="entry name" value="CYTOSOL_AP"/>
    <property type="match status" value="1"/>
</dbReference>
<organism>
    <name type="scientific">Escherichia coli (strain 55989 / EAEC)</name>
    <dbReference type="NCBI Taxonomy" id="585055"/>
    <lineage>
        <taxon>Bacteria</taxon>
        <taxon>Pseudomonadati</taxon>
        <taxon>Pseudomonadota</taxon>
        <taxon>Gammaproteobacteria</taxon>
        <taxon>Enterobacterales</taxon>
        <taxon>Enterobacteriaceae</taxon>
        <taxon>Escherichia</taxon>
    </lineage>
</organism>
<name>PEPB_ECO55</name>
<feature type="chain" id="PRO_1000192729" description="Peptidase B">
    <location>
        <begin position="1"/>
        <end position="427"/>
    </location>
</feature>
<feature type="active site" evidence="1">
    <location>
        <position position="207"/>
    </location>
</feature>
<feature type="active site" evidence="1">
    <location>
        <position position="281"/>
    </location>
</feature>
<feature type="binding site" evidence="1">
    <location>
        <position position="195"/>
    </location>
    <ligand>
        <name>Mn(2+)</name>
        <dbReference type="ChEBI" id="CHEBI:29035"/>
        <label>2</label>
    </ligand>
</feature>
<feature type="binding site" evidence="1">
    <location>
        <position position="200"/>
    </location>
    <ligand>
        <name>Mn(2+)</name>
        <dbReference type="ChEBI" id="CHEBI:29035"/>
        <label>1</label>
    </ligand>
</feature>
<feature type="binding site" evidence="1">
    <location>
        <position position="200"/>
    </location>
    <ligand>
        <name>Mn(2+)</name>
        <dbReference type="ChEBI" id="CHEBI:29035"/>
        <label>2</label>
    </ligand>
</feature>
<feature type="binding site" evidence="1">
    <location>
        <position position="218"/>
    </location>
    <ligand>
        <name>Mn(2+)</name>
        <dbReference type="ChEBI" id="CHEBI:29035"/>
        <label>2</label>
    </ligand>
</feature>
<feature type="binding site" evidence="1">
    <location>
        <position position="277"/>
    </location>
    <ligand>
        <name>Mn(2+)</name>
        <dbReference type="ChEBI" id="CHEBI:29035"/>
        <label>1</label>
    </ligand>
</feature>
<feature type="binding site" evidence="1">
    <location>
        <position position="279"/>
    </location>
    <ligand>
        <name>Mn(2+)</name>
        <dbReference type="ChEBI" id="CHEBI:29035"/>
        <label>1</label>
    </ligand>
</feature>
<feature type="binding site" evidence="1">
    <location>
        <position position="279"/>
    </location>
    <ligand>
        <name>Mn(2+)</name>
        <dbReference type="ChEBI" id="CHEBI:29035"/>
        <label>2</label>
    </ligand>
</feature>
<accession>B7LDB5</accession>
<evidence type="ECO:0000255" key="1">
    <source>
        <dbReference type="HAMAP-Rule" id="MF_00504"/>
    </source>
</evidence>
<gene>
    <name evidence="1" type="primary">pepB</name>
    <name type="ordered locus">EC55989_2808</name>
</gene>
<reference key="1">
    <citation type="journal article" date="2009" name="PLoS Genet.">
        <title>Organised genome dynamics in the Escherichia coli species results in highly diverse adaptive paths.</title>
        <authorList>
            <person name="Touchon M."/>
            <person name="Hoede C."/>
            <person name="Tenaillon O."/>
            <person name="Barbe V."/>
            <person name="Baeriswyl S."/>
            <person name="Bidet P."/>
            <person name="Bingen E."/>
            <person name="Bonacorsi S."/>
            <person name="Bouchier C."/>
            <person name="Bouvet O."/>
            <person name="Calteau A."/>
            <person name="Chiapello H."/>
            <person name="Clermont O."/>
            <person name="Cruveiller S."/>
            <person name="Danchin A."/>
            <person name="Diard M."/>
            <person name="Dossat C."/>
            <person name="Karoui M.E."/>
            <person name="Frapy E."/>
            <person name="Garry L."/>
            <person name="Ghigo J.M."/>
            <person name="Gilles A.M."/>
            <person name="Johnson J."/>
            <person name="Le Bouguenec C."/>
            <person name="Lescat M."/>
            <person name="Mangenot S."/>
            <person name="Martinez-Jehanne V."/>
            <person name="Matic I."/>
            <person name="Nassif X."/>
            <person name="Oztas S."/>
            <person name="Petit M.A."/>
            <person name="Pichon C."/>
            <person name="Rouy Z."/>
            <person name="Ruf C.S."/>
            <person name="Schneider D."/>
            <person name="Tourret J."/>
            <person name="Vacherie B."/>
            <person name="Vallenet D."/>
            <person name="Medigue C."/>
            <person name="Rocha E.P.C."/>
            <person name="Denamur E."/>
        </authorList>
    </citation>
    <scope>NUCLEOTIDE SEQUENCE [LARGE SCALE GENOMIC DNA]</scope>
    <source>
        <strain>55989 / EAEC</strain>
    </source>
</reference>
<comment type="function">
    <text evidence="1">Probably plays an important role in intracellular peptide degradation.</text>
</comment>
<comment type="catalytic activity">
    <reaction evidence="1">
        <text>Release of an N-terminal amino acid, Xaa, from a peptide or arylamide. Xaa is preferably Glu or Asp but may be other amino acids, including Leu, Met, His, Cys and Gln.</text>
        <dbReference type="EC" id="3.4.11.23"/>
    </reaction>
</comment>
<comment type="cofactor">
    <cofactor evidence="1">
        <name>Mn(2+)</name>
        <dbReference type="ChEBI" id="CHEBI:29035"/>
    </cofactor>
    <text evidence="1">Binds 2 manganese ions per subunit.</text>
</comment>
<comment type="subunit">
    <text evidence="1">Homohexamer.</text>
</comment>
<comment type="subcellular location">
    <subcellularLocation>
        <location evidence="1">Cytoplasm</location>
    </subcellularLocation>
</comment>
<comment type="similarity">
    <text evidence="1">Belongs to the peptidase M17 family.</text>
</comment>
<proteinExistence type="inferred from homology"/>
<protein>
    <recommendedName>
        <fullName evidence="1">Peptidase B</fullName>
        <ecNumber evidence="1">3.4.11.23</ecNumber>
    </recommendedName>
    <alternativeName>
        <fullName evidence="1">Aminopeptidase B</fullName>
    </alternativeName>
</protein>